<reference key="1">
    <citation type="journal article" date="2001" name="Nature">
        <title>Complete genome sequence of Salmonella enterica serovar Typhimurium LT2.</title>
        <authorList>
            <person name="McClelland M."/>
            <person name="Sanderson K.E."/>
            <person name="Spieth J."/>
            <person name="Clifton S.W."/>
            <person name="Latreille P."/>
            <person name="Courtney L."/>
            <person name="Porwollik S."/>
            <person name="Ali J."/>
            <person name="Dante M."/>
            <person name="Du F."/>
            <person name="Hou S."/>
            <person name="Layman D."/>
            <person name="Leonard S."/>
            <person name="Nguyen C."/>
            <person name="Scott K."/>
            <person name="Holmes A."/>
            <person name="Grewal N."/>
            <person name="Mulvaney E."/>
            <person name="Ryan E."/>
            <person name="Sun H."/>
            <person name="Florea L."/>
            <person name="Miller W."/>
            <person name="Stoneking T."/>
            <person name="Nhan M."/>
            <person name="Waterston R."/>
            <person name="Wilson R.K."/>
        </authorList>
    </citation>
    <scope>NUCLEOTIDE SEQUENCE [LARGE SCALE GENOMIC DNA]</scope>
    <source>
        <strain>LT2 / SGSC1412 / ATCC 700720</strain>
    </source>
</reference>
<feature type="signal peptide" evidence="1">
    <location>
        <begin position="1"/>
        <end position="21"/>
    </location>
</feature>
<feature type="chain" id="PRO_0000018275" description="Outer-membrane lipoprotein carrier protein">
    <location>
        <begin position="22"/>
        <end position="203"/>
    </location>
</feature>
<feature type="region of interest" description="Disordered" evidence="2">
    <location>
        <begin position="178"/>
        <end position="203"/>
    </location>
</feature>
<organism>
    <name type="scientific">Salmonella typhimurium (strain LT2 / SGSC1412 / ATCC 700720)</name>
    <dbReference type="NCBI Taxonomy" id="99287"/>
    <lineage>
        <taxon>Bacteria</taxon>
        <taxon>Pseudomonadati</taxon>
        <taxon>Pseudomonadota</taxon>
        <taxon>Gammaproteobacteria</taxon>
        <taxon>Enterobacterales</taxon>
        <taxon>Enterobacteriaceae</taxon>
        <taxon>Salmonella</taxon>
    </lineage>
</organism>
<name>LOLA_SALTY</name>
<proteinExistence type="inferred from homology"/>
<gene>
    <name evidence="1" type="primary">lolA</name>
    <name type="ordered locus">STM0961</name>
</gene>
<protein>
    <recommendedName>
        <fullName evidence="1">Outer-membrane lipoprotein carrier protein</fullName>
    </recommendedName>
</protein>
<sequence>MKKMAIACALLSSVVASSVWADAASSLKSRLDKVSSFHATFTQKVTDGSGAAVQEGQGDLWVKRPNLFNWHMTQPDESILVSDGKTLWFYNPFVEQATATWLKDATGNTPFMLIARNQASDWQQYNIKQDGDNFVLTPKASNGNLKQFTINVGRDGTIHQFSAVEQDDQRSAYQLKSQQNGAVDPSKFTFTPPQGVTIDDQRK</sequence>
<accession>Q8ZQD4</accession>
<evidence type="ECO:0000255" key="1">
    <source>
        <dbReference type="HAMAP-Rule" id="MF_00240"/>
    </source>
</evidence>
<evidence type="ECO:0000256" key="2">
    <source>
        <dbReference type="SAM" id="MobiDB-lite"/>
    </source>
</evidence>
<evidence type="ECO:0000305" key="3"/>
<comment type="function">
    <text evidence="1">Participates in the translocation of lipoproteins from the inner membrane to the outer membrane. Only forms a complex with a lipoprotein if the residue after the N-terminal Cys is not an aspartate (The Asp acts as a targeting signal to indicate that the lipoprotein should stay in the inner membrane).</text>
</comment>
<comment type="subunit">
    <text evidence="1">Monomer.</text>
</comment>
<comment type="subcellular location">
    <subcellularLocation>
        <location evidence="1">Periplasm</location>
    </subcellularLocation>
</comment>
<comment type="similarity">
    <text evidence="1">Belongs to the LolA family.</text>
</comment>
<comment type="sequence caution" evidence="3">
    <conflict type="erroneous initiation">
        <sequence resource="EMBL-CDS" id="AAL19896"/>
    </conflict>
</comment>
<dbReference type="EMBL" id="AE006468">
    <property type="protein sequence ID" value="AAL19896.1"/>
    <property type="status" value="ALT_INIT"/>
    <property type="molecule type" value="Genomic_DNA"/>
</dbReference>
<dbReference type="RefSeq" id="NP_459937.1">
    <property type="nucleotide sequence ID" value="NC_003197.2"/>
</dbReference>
<dbReference type="SMR" id="Q8ZQD4"/>
<dbReference type="STRING" id="99287.STM0961"/>
<dbReference type="PaxDb" id="99287-STM0961"/>
<dbReference type="GeneID" id="1252480"/>
<dbReference type="KEGG" id="stm:STM0961"/>
<dbReference type="PATRIC" id="fig|99287.12.peg.1013"/>
<dbReference type="HOGENOM" id="CLU_087560_1_1_6"/>
<dbReference type="OMA" id="YDPFVEQ"/>
<dbReference type="PhylomeDB" id="Q8ZQD4"/>
<dbReference type="Proteomes" id="UP000001014">
    <property type="component" value="Chromosome"/>
</dbReference>
<dbReference type="GO" id="GO:0030288">
    <property type="term" value="C:outer membrane-bounded periplasmic space"/>
    <property type="evidence" value="ECO:0000318"/>
    <property type="project" value="GO_Central"/>
</dbReference>
<dbReference type="GO" id="GO:0044874">
    <property type="term" value="P:lipoprotein localization to outer membrane"/>
    <property type="evidence" value="ECO:0000318"/>
    <property type="project" value="GO_Central"/>
</dbReference>
<dbReference type="GO" id="GO:0042953">
    <property type="term" value="P:lipoprotein transport"/>
    <property type="evidence" value="ECO:0000318"/>
    <property type="project" value="GO_Central"/>
</dbReference>
<dbReference type="CDD" id="cd16325">
    <property type="entry name" value="LolA"/>
    <property type="match status" value="1"/>
</dbReference>
<dbReference type="FunFam" id="2.50.20.10:FF:000001">
    <property type="entry name" value="Outer-membrane lipoprotein carrier protein"/>
    <property type="match status" value="1"/>
</dbReference>
<dbReference type="Gene3D" id="2.50.20.10">
    <property type="entry name" value="Lipoprotein localisation LolA/LolB/LppX"/>
    <property type="match status" value="1"/>
</dbReference>
<dbReference type="HAMAP" id="MF_00240">
    <property type="entry name" value="LolA"/>
    <property type="match status" value="1"/>
</dbReference>
<dbReference type="InterPro" id="IPR029046">
    <property type="entry name" value="LolA/LolB/LppX"/>
</dbReference>
<dbReference type="InterPro" id="IPR004564">
    <property type="entry name" value="OM_lipoprot_carrier_LolA-like"/>
</dbReference>
<dbReference type="InterPro" id="IPR018323">
    <property type="entry name" value="OM_lipoprot_carrier_LolA_Pbac"/>
</dbReference>
<dbReference type="NCBIfam" id="TIGR00547">
    <property type="entry name" value="lolA"/>
    <property type="match status" value="1"/>
</dbReference>
<dbReference type="PANTHER" id="PTHR35869">
    <property type="entry name" value="OUTER-MEMBRANE LIPOPROTEIN CARRIER PROTEIN"/>
    <property type="match status" value="1"/>
</dbReference>
<dbReference type="PANTHER" id="PTHR35869:SF1">
    <property type="entry name" value="OUTER-MEMBRANE LIPOPROTEIN CARRIER PROTEIN"/>
    <property type="match status" value="1"/>
</dbReference>
<dbReference type="Pfam" id="PF03548">
    <property type="entry name" value="LolA"/>
    <property type="match status" value="1"/>
</dbReference>
<dbReference type="SUPFAM" id="SSF89392">
    <property type="entry name" value="Prokaryotic lipoproteins and lipoprotein localization factors"/>
    <property type="match status" value="1"/>
</dbReference>
<keyword id="KW-0143">Chaperone</keyword>
<keyword id="KW-0574">Periplasm</keyword>
<keyword id="KW-0653">Protein transport</keyword>
<keyword id="KW-1185">Reference proteome</keyword>
<keyword id="KW-0732">Signal</keyword>
<keyword id="KW-0813">Transport</keyword>